<name>VPB12_SULTO</name>
<comment type="function">
    <text evidence="1">Possibly the antitoxin component of a type II toxin-antitoxin (TA) system. Its cognate toxin is VapC12 (Potential).</text>
</comment>
<comment type="similarity">
    <text evidence="1">Belongs to the UPF0330 family.</text>
</comment>
<comment type="sequence caution" evidence="2">
    <conflict type="erroneous initiation">
        <sequence resource="EMBL-CDS" id="BAB66160"/>
    </conflict>
    <text>Extended N-terminus.</text>
</comment>
<evidence type="ECO:0000255" key="1">
    <source>
        <dbReference type="HAMAP-Rule" id="MF_00794"/>
    </source>
</evidence>
<evidence type="ECO:0000305" key="2"/>
<dbReference type="EMBL" id="BA000023">
    <property type="protein sequence ID" value="BAB66160.1"/>
    <property type="status" value="ALT_INIT"/>
    <property type="molecule type" value="Genomic_DNA"/>
</dbReference>
<dbReference type="RefSeq" id="WP_010979141.1">
    <property type="nucleotide sequence ID" value="NC_003106.2"/>
</dbReference>
<dbReference type="STRING" id="273063.STK_11255"/>
<dbReference type="GeneID" id="1459114"/>
<dbReference type="KEGG" id="sto:STK_11255"/>
<dbReference type="PATRIC" id="fig|273063.9.peg.1270"/>
<dbReference type="eggNOG" id="arCOG02681">
    <property type="taxonomic scope" value="Archaea"/>
</dbReference>
<dbReference type="Proteomes" id="UP000001015">
    <property type="component" value="Chromosome"/>
</dbReference>
<dbReference type="HAMAP" id="MF_00794">
    <property type="entry name" value="UPF0330"/>
    <property type="match status" value="1"/>
</dbReference>
<dbReference type="InterPro" id="IPR003847">
    <property type="entry name" value="Put_antitoxin"/>
</dbReference>
<dbReference type="NCBIfam" id="NF010251">
    <property type="entry name" value="PRK13696.1-3"/>
    <property type="match status" value="1"/>
</dbReference>
<dbReference type="Pfam" id="PF02697">
    <property type="entry name" value="VAPB_antitox"/>
    <property type="match status" value="1"/>
</dbReference>
<proteinExistence type="inferred from homology"/>
<organism>
    <name type="scientific">Sulfurisphaera tokodaii (strain DSM 16993 / JCM 10545 / NBRC 100140 / 7)</name>
    <name type="common">Sulfolobus tokodaii</name>
    <dbReference type="NCBI Taxonomy" id="273063"/>
    <lineage>
        <taxon>Archaea</taxon>
        <taxon>Thermoproteota</taxon>
        <taxon>Thermoprotei</taxon>
        <taxon>Sulfolobales</taxon>
        <taxon>Sulfolobaceae</taxon>
        <taxon>Sulfurisphaera</taxon>
    </lineage>
</organism>
<protein>
    <recommendedName>
        <fullName evidence="1">Putative antitoxin VapB12</fullName>
    </recommendedName>
</protein>
<keyword id="KW-1185">Reference proteome</keyword>
<keyword id="KW-1277">Toxin-antitoxin system</keyword>
<feature type="chain" id="PRO_0000157116" description="Putative antitoxin VapB12">
    <location>
        <begin position="1"/>
        <end position="79"/>
    </location>
</feature>
<accession>Q972K6</accession>
<sequence>MKTIMIRDDVYKKLLEIKGDKSFSEIIEELIEESLSVRRKKIEKYFGILNEEEARGLAKEIEEMRKRTDEDIARKLSNY</sequence>
<reference key="1">
    <citation type="journal article" date="2001" name="DNA Res.">
        <title>Complete genome sequence of an aerobic thermoacidophilic Crenarchaeon, Sulfolobus tokodaii strain7.</title>
        <authorList>
            <person name="Kawarabayasi Y."/>
            <person name="Hino Y."/>
            <person name="Horikawa H."/>
            <person name="Jin-no K."/>
            <person name="Takahashi M."/>
            <person name="Sekine M."/>
            <person name="Baba S."/>
            <person name="Ankai A."/>
            <person name="Kosugi H."/>
            <person name="Hosoyama A."/>
            <person name="Fukui S."/>
            <person name="Nagai Y."/>
            <person name="Nishijima K."/>
            <person name="Otsuka R."/>
            <person name="Nakazawa H."/>
            <person name="Takamiya M."/>
            <person name="Kato Y."/>
            <person name="Yoshizawa T."/>
            <person name="Tanaka T."/>
            <person name="Kudoh Y."/>
            <person name="Yamazaki J."/>
            <person name="Kushida N."/>
            <person name="Oguchi A."/>
            <person name="Aoki K."/>
            <person name="Masuda S."/>
            <person name="Yanagii M."/>
            <person name="Nishimura M."/>
            <person name="Yamagishi A."/>
            <person name="Oshima T."/>
            <person name="Kikuchi H."/>
        </authorList>
    </citation>
    <scope>NUCLEOTIDE SEQUENCE [LARGE SCALE GENOMIC DNA]</scope>
    <source>
        <strain>DSM 16993 / JCM 10545 / NBRC 100140 / 7</strain>
    </source>
</reference>
<reference key="2">
    <citation type="journal article" date="2005" name="Nucleic Acids Res.">
        <title>Toxin-antitoxin loci are highly abundant in free-living but lost from host-associated prokaryotes.</title>
        <authorList>
            <person name="Pandey D.P."/>
            <person name="Gerdes K."/>
        </authorList>
    </citation>
    <scope>POSSIBLE FUNCTION</scope>
    <source>
        <strain>DSM 16993 / JCM 10545 / NBRC 100140 / 7</strain>
    </source>
</reference>
<gene>
    <name type="primary">vapB12</name>
    <name type="ordered locus">STK_11255</name>
    <name type="ORF">STS128</name>
</gene>